<reference key="1">
    <citation type="journal article" date="2012" name="J. Bacteriol.">
        <title>Complete genome sequence of the broad-host-range strain Sinorhizobium fredii USDA257.</title>
        <authorList>
            <person name="Schuldes J."/>
            <person name="Rodriguez Orbegoso M."/>
            <person name="Schmeisser C."/>
            <person name="Krishnan H.B."/>
            <person name="Daniel R."/>
            <person name="Streit W.R."/>
        </authorList>
    </citation>
    <scope>NUCLEOTIDE SEQUENCE [LARGE SCALE GENOMIC DNA]</scope>
    <source>
        <strain>USDA 257</strain>
    </source>
</reference>
<reference key="2">
    <citation type="journal article" date="1999" name="J. Bacteriol.">
        <title>Reduction of adenosine-5'-phosphosulfate instead of 3'-phosphoadenosine-5'-phosphosulfate in cysteine biosynthesis by Rhizobium meliloti and other members of the family Rhizobiaceae.</title>
        <authorList>
            <person name="Abola A.P."/>
            <person name="Willits M.G."/>
            <person name="Wang R.C."/>
            <person name="Long S.R."/>
        </authorList>
    </citation>
    <scope>FUNCTION</scope>
    <scope>CATALYTIC ACTIVITY</scope>
    <source>
        <strain>USDA 257</strain>
    </source>
</reference>
<organism>
    <name type="scientific">Sinorhizobium fredii (strain USDA 257)</name>
    <dbReference type="NCBI Taxonomy" id="1185652"/>
    <lineage>
        <taxon>Bacteria</taxon>
        <taxon>Pseudomonadati</taxon>
        <taxon>Pseudomonadota</taxon>
        <taxon>Alphaproteobacteria</taxon>
        <taxon>Hyphomicrobiales</taxon>
        <taxon>Rhizobiaceae</taxon>
        <taxon>Sinorhizobium/Ensifer group</taxon>
        <taxon>Sinorhizobium</taxon>
    </lineage>
</organism>
<name>CYSH_SINF2</name>
<dbReference type="EC" id="1.8.4.10" evidence="1 2"/>
<dbReference type="EMBL" id="CP003563">
    <property type="protein sequence ID" value="AFL49263.1"/>
    <property type="molecule type" value="Genomic_DNA"/>
</dbReference>
<dbReference type="RefSeq" id="WP_014761454.1">
    <property type="nucleotide sequence ID" value="NC_018000.1"/>
</dbReference>
<dbReference type="SMR" id="I3X057"/>
<dbReference type="STRING" id="1185652.USDA257_c06700"/>
<dbReference type="KEGG" id="sfd:USDA257_c06700"/>
<dbReference type="PATRIC" id="fig|1185652.3.peg.693"/>
<dbReference type="eggNOG" id="COG0175">
    <property type="taxonomic scope" value="Bacteria"/>
</dbReference>
<dbReference type="HOGENOM" id="CLU_044089_1_0_5"/>
<dbReference type="Proteomes" id="UP000006180">
    <property type="component" value="Chromosome"/>
</dbReference>
<dbReference type="GO" id="GO:0005737">
    <property type="term" value="C:cytoplasm"/>
    <property type="evidence" value="ECO:0007669"/>
    <property type="project" value="UniProtKB-SubCell"/>
</dbReference>
<dbReference type="GO" id="GO:0051539">
    <property type="term" value="F:4 iron, 4 sulfur cluster binding"/>
    <property type="evidence" value="ECO:0007669"/>
    <property type="project" value="UniProtKB-UniRule"/>
</dbReference>
<dbReference type="GO" id="GO:0043866">
    <property type="term" value="F:adenylyl-sulfate reductase (thioredoxin) activity"/>
    <property type="evidence" value="ECO:0007669"/>
    <property type="project" value="UniProtKB-EC"/>
</dbReference>
<dbReference type="GO" id="GO:0046872">
    <property type="term" value="F:metal ion binding"/>
    <property type="evidence" value="ECO:0007669"/>
    <property type="project" value="UniProtKB-KW"/>
</dbReference>
<dbReference type="GO" id="GO:0004604">
    <property type="term" value="F:phosphoadenylyl-sulfate reductase (thioredoxin) activity"/>
    <property type="evidence" value="ECO:0007669"/>
    <property type="project" value="UniProtKB-UniRule"/>
</dbReference>
<dbReference type="GO" id="GO:0019344">
    <property type="term" value="P:cysteine biosynthetic process"/>
    <property type="evidence" value="ECO:0007669"/>
    <property type="project" value="InterPro"/>
</dbReference>
<dbReference type="GO" id="GO:0070814">
    <property type="term" value="P:hydrogen sulfide biosynthetic process"/>
    <property type="evidence" value="ECO:0007669"/>
    <property type="project" value="UniProtKB-UniRule"/>
</dbReference>
<dbReference type="GO" id="GO:0019379">
    <property type="term" value="P:sulfate assimilation, phosphoadenylyl sulfate reduction by phosphoadenylyl-sulfate reductase (thioredoxin)"/>
    <property type="evidence" value="ECO:0007669"/>
    <property type="project" value="UniProtKB-UniRule"/>
</dbReference>
<dbReference type="CDD" id="cd23945">
    <property type="entry name" value="PAPS_reductase"/>
    <property type="match status" value="1"/>
</dbReference>
<dbReference type="Gene3D" id="3.40.50.620">
    <property type="entry name" value="HUPs"/>
    <property type="match status" value="1"/>
</dbReference>
<dbReference type="HAMAP" id="MF_00063">
    <property type="entry name" value="CysH"/>
    <property type="match status" value="1"/>
</dbReference>
<dbReference type="InterPro" id="IPR011798">
    <property type="entry name" value="APS_reductase"/>
</dbReference>
<dbReference type="InterPro" id="IPR004511">
    <property type="entry name" value="PAPS/APS_Rdtase"/>
</dbReference>
<dbReference type="InterPro" id="IPR002500">
    <property type="entry name" value="PAPS_reduct_dom"/>
</dbReference>
<dbReference type="InterPro" id="IPR014729">
    <property type="entry name" value="Rossmann-like_a/b/a_fold"/>
</dbReference>
<dbReference type="NCBIfam" id="TIGR02055">
    <property type="entry name" value="APS_reductase"/>
    <property type="match status" value="1"/>
</dbReference>
<dbReference type="NCBIfam" id="NF002537">
    <property type="entry name" value="PRK02090.1"/>
    <property type="match status" value="1"/>
</dbReference>
<dbReference type="PANTHER" id="PTHR46482:SF9">
    <property type="entry name" value="5'-ADENYLYLSULFATE REDUCTASE 1, CHLOROPLASTIC"/>
    <property type="match status" value="1"/>
</dbReference>
<dbReference type="PANTHER" id="PTHR46482">
    <property type="entry name" value="5'-ADENYLYLSULFATE REDUCTASE 3, CHLOROPLASTIC"/>
    <property type="match status" value="1"/>
</dbReference>
<dbReference type="Pfam" id="PF01507">
    <property type="entry name" value="PAPS_reduct"/>
    <property type="match status" value="1"/>
</dbReference>
<dbReference type="PIRSF" id="PIRSF000857">
    <property type="entry name" value="PAPS_reductase"/>
    <property type="match status" value="1"/>
</dbReference>
<dbReference type="SUPFAM" id="SSF52402">
    <property type="entry name" value="Adenine nucleotide alpha hydrolases-like"/>
    <property type="match status" value="1"/>
</dbReference>
<feature type="active site" description="Nucleophile; cysteine thiosulfonate intermediate" evidence="1">
    <location>
        <position position="232"/>
    </location>
</feature>
<feature type="binding site" evidence="1">
    <location>
        <position position="121"/>
    </location>
    <ligand>
        <name>[4Fe-4S] cluster</name>
        <dbReference type="ChEBI" id="CHEBI:49883"/>
    </ligand>
</feature>
<feature type="binding site" evidence="1">
    <location>
        <position position="122"/>
    </location>
    <ligand>
        <name>[4Fe-4S] cluster</name>
        <dbReference type="ChEBI" id="CHEBI:49883"/>
    </ligand>
</feature>
<feature type="binding site" evidence="1">
    <location>
        <position position="204"/>
    </location>
    <ligand>
        <name>[4Fe-4S] cluster</name>
        <dbReference type="ChEBI" id="CHEBI:49883"/>
    </ligand>
</feature>
<feature type="binding site" evidence="1">
    <location>
        <position position="207"/>
    </location>
    <ligand>
        <name>[4Fe-4S] cluster</name>
        <dbReference type="ChEBI" id="CHEBI:49883"/>
    </ligand>
</feature>
<evidence type="ECO:0000255" key="1">
    <source>
        <dbReference type="HAMAP-Rule" id="MF_00063"/>
    </source>
</evidence>
<evidence type="ECO:0000269" key="2">
    <source>
    </source>
</evidence>
<evidence type="ECO:0000303" key="3">
    <source>
    </source>
</evidence>
<evidence type="ECO:0000305" key="4"/>
<evidence type="ECO:0000312" key="5">
    <source>
        <dbReference type="EMBL" id="AFL49263.1"/>
    </source>
</evidence>
<keyword id="KW-0963">Cytoplasm</keyword>
<keyword id="KW-0408">Iron</keyword>
<keyword id="KW-0411">Iron-sulfur</keyword>
<keyword id="KW-0479">Metal-binding</keyword>
<keyword id="KW-0560">Oxidoreductase</keyword>
<sequence>MTTQSLEAEAKALNDKLESLDLAGRLAMVAGLDGRAVFTTSLGIEDQVITAAIGINRLDIEVATLKTGRLFNETVALVEETEETYNILIKRYYPEKADIEAYVAQYGMNGFYESVEARHACCGVRKLKPLARALEGASYWITGLRRGQSGNRATTPFAEADLERGLIKINPLADWDIETIRAHVAAEAIPVNPLHGRGYPSIGCEPCTRAIKPGEPERAGRWWWENDEKRECGLHVAEAASSIIPNASSAA</sequence>
<accession>I3X057</accession>
<proteinExistence type="evidence at protein level"/>
<gene>
    <name evidence="1 3" type="primary">cysH</name>
    <name evidence="5" type="ORF">USDA257_c06700</name>
</gene>
<protein>
    <recommendedName>
        <fullName evidence="1 3">Adenosine 5'-phosphosulfate reductase</fullName>
        <shortName evidence="1 3">APS reductase</shortName>
        <ecNumber evidence="1 2">1.8.4.10</ecNumber>
    </recommendedName>
    <alternativeName>
        <fullName evidence="1 4">5'-adenylylsulfate reductase</fullName>
    </alternativeName>
    <alternativeName>
        <fullName evidence="1 4">Thioredoxin-dependent 5'-adenylylsulfate reductase</fullName>
    </alternativeName>
</protein>
<comment type="function">
    <text evidence="1 2">Catalyzes the formation of sulfite from adenosine 5'-phosphosulfate (APS) using thioredoxin as an electron donor.</text>
</comment>
<comment type="catalytic activity">
    <reaction evidence="1 2">
        <text>[thioredoxin]-disulfide + sulfite + AMP + 2 H(+) = adenosine 5'-phosphosulfate + [thioredoxin]-dithiol</text>
        <dbReference type="Rhea" id="RHEA:21976"/>
        <dbReference type="Rhea" id="RHEA-COMP:10698"/>
        <dbReference type="Rhea" id="RHEA-COMP:10700"/>
        <dbReference type="ChEBI" id="CHEBI:15378"/>
        <dbReference type="ChEBI" id="CHEBI:17359"/>
        <dbReference type="ChEBI" id="CHEBI:29950"/>
        <dbReference type="ChEBI" id="CHEBI:50058"/>
        <dbReference type="ChEBI" id="CHEBI:58243"/>
        <dbReference type="ChEBI" id="CHEBI:456215"/>
        <dbReference type="EC" id="1.8.4.10"/>
    </reaction>
</comment>
<comment type="cofactor">
    <cofactor evidence="1">
        <name>[4Fe-4S] cluster</name>
        <dbReference type="ChEBI" id="CHEBI:49883"/>
    </cofactor>
    <text evidence="1">Binds 1 [4Fe-4S] cluster per subunit.</text>
</comment>
<comment type="pathway">
    <text evidence="1">Sulfur metabolism; hydrogen sulfide biosynthesis; sulfite from sulfate.</text>
</comment>
<comment type="subcellular location">
    <subcellularLocation>
        <location evidence="1">Cytoplasm</location>
    </subcellularLocation>
</comment>
<comment type="similarity">
    <text evidence="1">Belongs to the PAPS reductase family. CysH subfamily.</text>
</comment>